<organism>
    <name type="scientific">Escherichia coli (strain SE11)</name>
    <dbReference type="NCBI Taxonomy" id="409438"/>
    <lineage>
        <taxon>Bacteria</taxon>
        <taxon>Pseudomonadati</taxon>
        <taxon>Pseudomonadota</taxon>
        <taxon>Gammaproteobacteria</taxon>
        <taxon>Enterobacterales</taxon>
        <taxon>Enterobacteriaceae</taxon>
        <taxon>Escherichia</taxon>
    </lineage>
</organism>
<comment type="function">
    <text evidence="1">Converts the aldose L-fucose into the corresponding ketose L-fuculose.</text>
</comment>
<comment type="catalytic activity">
    <reaction evidence="1">
        <text>L-fucose = L-fuculose</text>
        <dbReference type="Rhea" id="RHEA:17233"/>
        <dbReference type="ChEBI" id="CHEBI:2181"/>
        <dbReference type="ChEBI" id="CHEBI:17617"/>
        <dbReference type="EC" id="5.3.1.25"/>
    </reaction>
</comment>
<comment type="cofactor">
    <cofactor evidence="1">
        <name>Mn(2+)</name>
        <dbReference type="ChEBI" id="CHEBI:29035"/>
    </cofactor>
</comment>
<comment type="pathway">
    <text evidence="1">Carbohydrate degradation; L-fucose degradation; L-lactaldehyde and glycerone phosphate from L-fucose: step 1/3.</text>
</comment>
<comment type="subunit">
    <text evidence="1">Homohexamer.</text>
</comment>
<comment type="subcellular location">
    <subcellularLocation>
        <location evidence="1">Cytoplasm</location>
    </subcellularLocation>
</comment>
<comment type="similarity">
    <text evidence="1">Belongs to the L-fucose isomerase family.</text>
</comment>
<feature type="chain" id="PRO_1000139954" description="L-fucose isomerase">
    <location>
        <begin position="1"/>
        <end position="591"/>
    </location>
</feature>
<feature type="active site" description="Proton acceptor" evidence="1">
    <location>
        <position position="337"/>
    </location>
</feature>
<feature type="active site" description="Proton acceptor" evidence="1">
    <location>
        <position position="361"/>
    </location>
</feature>
<feature type="binding site" evidence="1">
    <location>
        <position position="337"/>
    </location>
    <ligand>
        <name>Mn(2+)</name>
        <dbReference type="ChEBI" id="CHEBI:29035"/>
    </ligand>
</feature>
<feature type="binding site" evidence="1">
    <location>
        <position position="361"/>
    </location>
    <ligand>
        <name>Mn(2+)</name>
        <dbReference type="ChEBI" id="CHEBI:29035"/>
    </ligand>
</feature>
<feature type="binding site" evidence="1">
    <location>
        <position position="528"/>
    </location>
    <ligand>
        <name>Mn(2+)</name>
        <dbReference type="ChEBI" id="CHEBI:29035"/>
    </ligand>
</feature>
<dbReference type="EC" id="5.3.1.25" evidence="1"/>
<dbReference type="EMBL" id="AP009240">
    <property type="protein sequence ID" value="BAG78586.1"/>
    <property type="molecule type" value="Genomic_DNA"/>
</dbReference>
<dbReference type="RefSeq" id="WP_000724149.1">
    <property type="nucleotide sequence ID" value="NC_011415.1"/>
</dbReference>
<dbReference type="SMR" id="B6I6K0"/>
<dbReference type="KEGG" id="ecy:ECSE_3062"/>
<dbReference type="HOGENOM" id="CLU_033326_1_0_6"/>
<dbReference type="UniPathway" id="UPA00563">
    <property type="reaction ID" value="UER00624"/>
</dbReference>
<dbReference type="Proteomes" id="UP000008199">
    <property type="component" value="Chromosome"/>
</dbReference>
<dbReference type="GO" id="GO:0005737">
    <property type="term" value="C:cytoplasm"/>
    <property type="evidence" value="ECO:0007669"/>
    <property type="project" value="UniProtKB-SubCell"/>
</dbReference>
<dbReference type="GO" id="GO:0008790">
    <property type="term" value="F:arabinose isomerase activity"/>
    <property type="evidence" value="ECO:0007669"/>
    <property type="project" value="TreeGrafter"/>
</dbReference>
<dbReference type="GO" id="GO:0008736">
    <property type="term" value="F:L-fucose isomerase activity"/>
    <property type="evidence" value="ECO:0007669"/>
    <property type="project" value="UniProtKB-UniRule"/>
</dbReference>
<dbReference type="GO" id="GO:0030145">
    <property type="term" value="F:manganese ion binding"/>
    <property type="evidence" value="ECO:0007669"/>
    <property type="project" value="UniProtKB-UniRule"/>
</dbReference>
<dbReference type="GO" id="GO:0019571">
    <property type="term" value="P:D-arabinose catabolic process"/>
    <property type="evidence" value="ECO:0007669"/>
    <property type="project" value="TreeGrafter"/>
</dbReference>
<dbReference type="GO" id="GO:0042355">
    <property type="term" value="P:L-fucose catabolic process"/>
    <property type="evidence" value="ECO:0007669"/>
    <property type="project" value="UniProtKB-UniRule"/>
</dbReference>
<dbReference type="CDD" id="cd03556">
    <property type="entry name" value="L-fucose_isomerase"/>
    <property type="match status" value="1"/>
</dbReference>
<dbReference type="FunFam" id="3.20.14.10:FF:000001">
    <property type="entry name" value="L-fucose isomerase"/>
    <property type="match status" value="1"/>
</dbReference>
<dbReference type="FunFam" id="3.40.275.10:FF:000001">
    <property type="entry name" value="L-fucose isomerase"/>
    <property type="match status" value="1"/>
</dbReference>
<dbReference type="FunFam" id="3.40.50.1070:FF:000001">
    <property type="entry name" value="L-fucose isomerase"/>
    <property type="match status" value="1"/>
</dbReference>
<dbReference type="Gene3D" id="3.40.50.1070">
    <property type="match status" value="1"/>
</dbReference>
<dbReference type="Gene3D" id="3.40.275.10">
    <property type="entry name" value="L-fucose Isomerase, Chain A, domain 2"/>
    <property type="match status" value="1"/>
</dbReference>
<dbReference type="Gene3D" id="3.20.14.10">
    <property type="entry name" value="L-fucose/L-arabinose isomerase, C-terminal"/>
    <property type="match status" value="1"/>
</dbReference>
<dbReference type="HAMAP" id="MF_01254">
    <property type="entry name" value="Fucose_iso"/>
    <property type="match status" value="1"/>
</dbReference>
<dbReference type="InterPro" id="IPR004216">
    <property type="entry name" value="Fuc/Ara_isomerase_C"/>
</dbReference>
<dbReference type="InterPro" id="IPR038393">
    <property type="entry name" value="Fuc_iso_dom3_sf"/>
</dbReference>
<dbReference type="InterPro" id="IPR015888">
    <property type="entry name" value="Fuc_isomerase_C"/>
</dbReference>
<dbReference type="InterPro" id="IPR038391">
    <property type="entry name" value="Fucose_iso_dom1_sf"/>
</dbReference>
<dbReference type="InterPro" id="IPR012888">
    <property type="entry name" value="Fucose_iso_N1"/>
</dbReference>
<dbReference type="InterPro" id="IPR005763">
    <property type="entry name" value="Fucose_isomerase"/>
</dbReference>
<dbReference type="InterPro" id="IPR038392">
    <property type="entry name" value="Fucose_isomerase_dom2_sf"/>
</dbReference>
<dbReference type="InterPro" id="IPR009015">
    <property type="entry name" value="Fucose_isomerase_N/cen_sf"/>
</dbReference>
<dbReference type="InterPro" id="IPR012889">
    <property type="entry name" value="Fucose_isomerase_N2"/>
</dbReference>
<dbReference type="NCBIfam" id="TIGR01089">
    <property type="entry name" value="fucI"/>
    <property type="match status" value="1"/>
</dbReference>
<dbReference type="NCBIfam" id="NF008220">
    <property type="entry name" value="PRK10991.1"/>
    <property type="match status" value="1"/>
</dbReference>
<dbReference type="PANTHER" id="PTHR37840">
    <property type="entry name" value="L-FUCOSE ISOMERASE"/>
    <property type="match status" value="1"/>
</dbReference>
<dbReference type="PANTHER" id="PTHR37840:SF1">
    <property type="entry name" value="L-FUCOSE ISOMERASE"/>
    <property type="match status" value="1"/>
</dbReference>
<dbReference type="Pfam" id="PF02952">
    <property type="entry name" value="Fucose_iso_C"/>
    <property type="match status" value="1"/>
</dbReference>
<dbReference type="Pfam" id="PF07881">
    <property type="entry name" value="Fucose_iso_N1"/>
    <property type="match status" value="1"/>
</dbReference>
<dbReference type="Pfam" id="PF07882">
    <property type="entry name" value="Fucose_iso_N2"/>
    <property type="match status" value="1"/>
</dbReference>
<dbReference type="SUPFAM" id="SSF50443">
    <property type="entry name" value="FucI/AraA C-terminal domain-like"/>
    <property type="match status" value="1"/>
</dbReference>
<dbReference type="SUPFAM" id="SSF53743">
    <property type="entry name" value="FucI/AraA N-terminal and middle domains"/>
    <property type="match status" value="1"/>
</dbReference>
<keyword id="KW-0119">Carbohydrate metabolism</keyword>
<keyword id="KW-0963">Cytoplasm</keyword>
<keyword id="KW-0294">Fucose metabolism</keyword>
<keyword id="KW-0413">Isomerase</keyword>
<keyword id="KW-0464">Manganese</keyword>
<keyword id="KW-0479">Metal-binding</keyword>
<proteinExistence type="inferred from homology"/>
<evidence type="ECO:0000255" key="1">
    <source>
        <dbReference type="HAMAP-Rule" id="MF_01254"/>
    </source>
</evidence>
<accession>B6I6K0</accession>
<reference key="1">
    <citation type="journal article" date="2008" name="DNA Res.">
        <title>Complete genome sequence and comparative analysis of the wild-type commensal Escherichia coli strain SE11 isolated from a healthy adult.</title>
        <authorList>
            <person name="Oshima K."/>
            <person name="Toh H."/>
            <person name="Ogura Y."/>
            <person name="Sasamoto H."/>
            <person name="Morita H."/>
            <person name="Park S.-H."/>
            <person name="Ooka T."/>
            <person name="Iyoda S."/>
            <person name="Taylor T.D."/>
            <person name="Hayashi T."/>
            <person name="Itoh K."/>
            <person name="Hattori M."/>
        </authorList>
    </citation>
    <scope>NUCLEOTIDE SEQUENCE [LARGE SCALE GENOMIC DNA]</scope>
    <source>
        <strain>SE11</strain>
    </source>
</reference>
<gene>
    <name evidence="1" type="primary">fucI</name>
    <name type="ordered locus">ECSE_3062</name>
</gene>
<protein>
    <recommendedName>
        <fullName evidence="1">L-fucose isomerase</fullName>
        <ecNumber evidence="1">5.3.1.25</ecNumber>
    </recommendedName>
    <alternativeName>
        <fullName evidence="1">6-deoxy-L-galactose isomerase</fullName>
    </alternativeName>
    <alternativeName>
        <fullName>FucIase</fullName>
    </alternativeName>
</protein>
<name>FUCI_ECOSE</name>
<sequence length="591" mass="64991">MKKISLPKIGIRPVIDGRRMGVRESLEEQTMNMAKATAALLTEKLRHACGAAVECVISDTCIAGMAEAAACEEKFSSQNVGLTITVTPCWCYGSETIDMDPTRPKAIWGFNGTERPGAVYLAAALAAHSQKGIPAFSIYGHDVQDADDTSIPADVEEKLLRFARAGLAVASMKGKSYLSLGGVSMGIAGSIVDHNFFESWLGMKVQAVDMTELRRRIDQKIYDEAELEMALAWADKNFRYGEDENNKQYQRNAEQSRAVLRESLLMAMCIRDMMQGNSKLADIGRVEESLGYNAIAAGFQGQRHWTDQYPNGDTAEAILNSSFDWNGVREPFVVATENDSLNGVAMLMGHQLTGTAQVFADVRTYWSPEAIERVTGHKLDGLAEHGIIHLINSGSAALDGSCKQRDSEGNPTMKPHWEISQKEADACLAATEWCPAIHEYFRGGGYSSRFLTEGGVPFTMTRVNIIKGLGPVLQIAEGWSVELPKDVHDILNKRTNSTWPTTWFAPRLTGKGPFTDVYSIMANWGANHGVLTIGHVGADFITLASMLRIPVCMHNVEETKVYRPSAWAAHGMDIEGQDYRACQNYGPLYKR</sequence>